<gene>
    <name type="primary">Katnip</name>
    <name type="synonym">Kiaa0556</name>
</gene>
<feature type="chain" id="PRO_0000313091" description="Katanin-interacting protein">
    <location>
        <begin position="1"/>
        <end position="1610"/>
    </location>
</feature>
<feature type="region of interest" description="Disordered" evidence="3">
    <location>
        <begin position="1"/>
        <end position="24"/>
    </location>
</feature>
<feature type="region of interest" description="Disordered" evidence="3">
    <location>
        <begin position="84"/>
        <end position="105"/>
    </location>
</feature>
<feature type="region of interest" description="Disordered" evidence="3">
    <location>
        <begin position="118"/>
        <end position="137"/>
    </location>
</feature>
<feature type="region of interest" description="Disordered" evidence="3">
    <location>
        <begin position="173"/>
        <end position="236"/>
    </location>
</feature>
<feature type="region of interest" description="Disordered" evidence="3">
    <location>
        <begin position="305"/>
        <end position="333"/>
    </location>
</feature>
<feature type="region of interest" description="Disordered" evidence="3">
    <location>
        <begin position="702"/>
        <end position="722"/>
    </location>
</feature>
<feature type="region of interest" description="Disordered" evidence="3">
    <location>
        <begin position="760"/>
        <end position="821"/>
    </location>
</feature>
<feature type="region of interest" description="Disordered" evidence="3">
    <location>
        <begin position="836"/>
        <end position="875"/>
    </location>
</feature>
<feature type="region of interest" description="Disordered" evidence="3">
    <location>
        <begin position="927"/>
        <end position="951"/>
    </location>
</feature>
<feature type="coiled-coil region" evidence="2">
    <location>
        <begin position="330"/>
        <end position="354"/>
    </location>
</feature>
<feature type="compositionally biased region" description="Basic and acidic residues" evidence="3">
    <location>
        <begin position="173"/>
        <end position="184"/>
    </location>
</feature>
<feature type="compositionally biased region" description="Polar residues" evidence="3">
    <location>
        <begin position="188"/>
        <end position="197"/>
    </location>
</feature>
<feature type="compositionally biased region" description="Acidic residues" evidence="3">
    <location>
        <begin position="198"/>
        <end position="218"/>
    </location>
</feature>
<feature type="compositionally biased region" description="Basic and acidic residues" evidence="3">
    <location>
        <begin position="306"/>
        <end position="321"/>
    </location>
</feature>
<feature type="compositionally biased region" description="Low complexity" evidence="3">
    <location>
        <begin position="704"/>
        <end position="718"/>
    </location>
</feature>
<feature type="compositionally biased region" description="Basic and acidic residues" evidence="3">
    <location>
        <begin position="775"/>
        <end position="787"/>
    </location>
</feature>
<feature type="compositionally biased region" description="Basic and acidic residues" evidence="3">
    <location>
        <begin position="798"/>
        <end position="810"/>
    </location>
</feature>
<feature type="compositionally biased region" description="Basic and acidic residues" evidence="3">
    <location>
        <begin position="855"/>
        <end position="873"/>
    </location>
</feature>
<feature type="compositionally biased region" description="Basic and acidic residues" evidence="3">
    <location>
        <begin position="927"/>
        <end position="941"/>
    </location>
</feature>
<feature type="modified residue" description="Phosphoserine" evidence="1">
    <location>
        <position position="658"/>
    </location>
</feature>
<feature type="modified residue" description="Phosphoserine" evidence="1">
    <location>
        <position position="688"/>
    </location>
</feature>
<feature type="splice variant" id="VSP_030009" description="In isoform 2." evidence="6">
    <location>
        <begin position="1"/>
        <end position="260"/>
    </location>
</feature>
<feature type="splice variant" id="VSP_030010" description="In isoform 3." evidence="6">
    <location>
        <begin position="738"/>
        <end position="870"/>
    </location>
</feature>
<feature type="splice variant" id="VSP_030011" description="In isoform 2." evidence="6">
    <original>LIDGMNITTEDEHMWLI</original>
    <variation>CPFTVALSPAGTDCLGS</variation>
    <location>
        <begin position="1262"/>
        <end position="1278"/>
    </location>
</feature>
<feature type="splice variant" id="VSP_030012" description="In isoform 2." evidence="6">
    <location>
        <begin position="1280"/>
        <end position="1610"/>
    </location>
</feature>
<feature type="splice variant" id="VSP_030013" description="In isoform 4." evidence="5">
    <original>NRVYVIFDLPTTVSMIKLWNYTKTPQRGVKEFG</original>
    <variation>PKLPTLQRSLGLGRVWEAGRVRGAGLTGAGPTLSQ</variation>
    <location>
        <begin position="1476"/>
        <end position="1508"/>
    </location>
</feature>
<feature type="sequence conflict" description="In Ref. 3; AAH42743." evidence="7" ref="3">
    <original>EAGS</original>
    <variation>HASA</variation>
    <location>
        <begin position="144"/>
        <end position="147"/>
    </location>
</feature>
<feature type="sequence conflict" description="In Ref. 2; BAC35016." evidence="7" ref="2">
    <original>VDIRNAVLPGELGCLVNRDLV</original>
    <variation>GPFALKTGRNVSNSSHPLAFQ</variation>
    <location>
        <begin position="513"/>
        <end position="533"/>
    </location>
</feature>
<feature type="sequence conflict" description="In Ref. 3; AAH42743." evidence="7" ref="3">
    <original>LQLYFIIHNM</original>
    <variation>PLSLPFDVLH</variation>
    <location>
        <begin position="549"/>
        <end position="558"/>
    </location>
</feature>
<feature type="sequence conflict" description="In Ref. 4; BAC65591." evidence="7" ref="4">
    <original>E</original>
    <variation>Q</variation>
    <location>
        <position position="1093"/>
    </location>
</feature>
<protein>
    <recommendedName>
        <fullName>Katanin-interacting protein</fullName>
    </recommendedName>
</protein>
<sequence>MDGQALRKVERSRSCSQERKEGYSKDMVTDFDEKHDEYLILLQQRNRILKHLKAKDPVQLRLEHLEQGFSVYVNGANSELKTSPRKAVHTDFSRSASQAEGSQDYGRRTLFREAEEVLRRSSRTAPGKVQRRGWHQKSVQIRTEAGSRLHIEPPLDCSEDFESQEDVIGKHEDATGEHTQELRKGLGLSTSLQTQEDGSSDEYDSIEEDVLSETETEDPVLPVHNRDECPLPSHDAVQKDVPKDQELEGRHPQATDTLVVMEFNPASKGNKMDRILSAKRKENAEVFIPSKPDSVLNPQPPAVFPEQERACSRSGSRRDRPLSATRKAYAAEDREEDASAVLKAIQVENEALQQVFLSHDPELHTSPQQDTKEPPAKSWSSLLKAKEDIPELLPATPVTTDPELCRAAAGAKAVSQAMDGMSPLGSRQQHKLVGVLQTMESDTTHLSQVAIPTEKPVPNSEEKWKARVDEIEDAIYVTMEILSNWGNASWVGLTEVQFFDLNNIKLYVSPHDVDIRNAVLPGELGCLVNRDLVSKKDPPVWTCPFHPPLQLYFIIHNMRQLRDFGLTMIKVRNYWTADGDLDIGAKNVKLYVNKSLIFDGVLEKGGGEAPSDCTIPVDLQRERNESSDKALSTGWKESKGALKMAALSDARELGLSCSQPAESLDMTVSSQGDFLGEKVNSTSGLKNSLSKLQEDVRLLATPASMGDGPSVPSSSSPGKCLPLEEEPSLIQQLESLRGRKIPEPTGKTPHWLQPSLAGMGKKQTVRKPKPLWLSPEKDLEQKSRFPSEDVMGDTPGEVETREKGPRREQGRTSSWNVITEERAPKAFSKACGDDLDIFSQLPNRDRPASGRRALKKEASSSHGDDRPASKEDTQASQTLPWLQWYGEQEHALHASWDSLTAFDRAHRGRISALEPQGDILDEFLKQQRSSRHEEFPAPCREEEPEPSTEMGGDSDFKIPVLPYGQHLVIDIKSTWGDRHYVGLNGIEIFSSSGEPVQISSITADPPDINILPAYGKDPRVVSNLIDGVNRTQDDMHVWLAPFTPGMTHTISIEFTHPCQVALIRIWNYNKSRIHSFRGVKDITMLLDTQCIFEGEIAKASGTLMGAPEHFGDTILFTMDEDILEAIFCLDDTFDMDAESLCGLQPEEALRRPSTADGEGQDERPFTQAGLGAQDQVPGLELQTSPPVSEVTTPEPGIFYGLCLRLNLTASWGDLHYIGLTGLEVVGKDGEALPIQPHQLSASPRDLNDLPEYNDDSRTLDKLIDGMNITTEDEHMWLIPFSPGLDHVVMIHFDRAQSIAGLRLWNYNKSPEDTYRGVKIAHVSLDGLCVSPAEGFLIRKGPGNCHFDFAQEILFGDYLQTRLPPAPTRRLDAKSLERASMDYEAPLMPCGFIFQFQLLSSWGDPYYIGLTGLELYDEHGERIPLSQNNIAAFPDSVNALEGVCGDVRTPDKLIDQVNDTSDGRHMWLAPILPGLVNRVYVIFDLPTTVSMIKLWNYTKTPQRGVKEFGLLVDDLLVYNGILAMVSHLVGGILPTCEPTVPHHTILFAEDTDFCHQEKHAIISKPEEDQDIQMMNENQVITTSRRKPGTADPALRPKTCIREKETSRRWRC</sequence>
<dbReference type="EMBL" id="AC002551">
    <property type="status" value="NOT_ANNOTATED_CDS"/>
    <property type="molecule type" value="Genomic_DNA"/>
</dbReference>
<dbReference type="EMBL" id="AC008732">
    <property type="status" value="NOT_ANNOTATED_CDS"/>
    <property type="molecule type" value="Genomic_DNA"/>
</dbReference>
<dbReference type="EMBL" id="AC016597">
    <property type="status" value="NOT_ANNOTATED_CDS"/>
    <property type="molecule type" value="Genomic_DNA"/>
</dbReference>
<dbReference type="EMBL" id="AC092330">
    <property type="status" value="NOT_ANNOTATED_CDS"/>
    <property type="molecule type" value="Genomic_DNA"/>
</dbReference>
<dbReference type="EMBL" id="AK052492">
    <property type="protein sequence ID" value="BAC35016.1"/>
    <property type="molecule type" value="mRNA"/>
</dbReference>
<dbReference type="EMBL" id="AK052528">
    <property type="protein sequence ID" value="BAC35027.1"/>
    <property type="molecule type" value="mRNA"/>
</dbReference>
<dbReference type="EMBL" id="BC030902">
    <property type="protein sequence ID" value="AAH30902.1"/>
    <property type="status" value="ALT_INIT"/>
    <property type="molecule type" value="mRNA"/>
</dbReference>
<dbReference type="EMBL" id="BC042743">
    <property type="protein sequence ID" value="AAH42743.1"/>
    <property type="status" value="ALT_INIT"/>
    <property type="molecule type" value="mRNA"/>
</dbReference>
<dbReference type="EMBL" id="AK122309">
    <property type="protein sequence ID" value="BAC65591.3"/>
    <property type="molecule type" value="Transcribed_RNA"/>
</dbReference>
<dbReference type="CCDS" id="CCDS40123.1">
    <molecule id="Q8C753-1"/>
</dbReference>
<dbReference type="RefSeq" id="NP_001074491.1">
    <molecule id="Q8C753-1"/>
    <property type="nucleotide sequence ID" value="NM_001081022.2"/>
</dbReference>
<dbReference type="BioGRID" id="231458">
    <property type="interactions" value="2"/>
</dbReference>
<dbReference type="FunCoup" id="Q8C753">
    <property type="interactions" value="1388"/>
</dbReference>
<dbReference type="STRING" id="10090.ENSMUSP00000065744"/>
<dbReference type="iPTMnet" id="Q8C753"/>
<dbReference type="PhosphoSitePlus" id="Q8C753"/>
<dbReference type="PaxDb" id="10090-ENSMUSP00000065744"/>
<dbReference type="ProteomicsDB" id="268918">
    <molecule id="Q8C753-1"/>
</dbReference>
<dbReference type="ProteomicsDB" id="268919">
    <molecule id="Q8C753-2"/>
</dbReference>
<dbReference type="ProteomicsDB" id="268920">
    <molecule id="Q8C753-3"/>
</dbReference>
<dbReference type="ProteomicsDB" id="268921">
    <molecule id="Q8C753-4"/>
</dbReference>
<dbReference type="Antibodypedia" id="26294">
    <property type="antibodies" value="26 antibodies from 9 providers"/>
</dbReference>
<dbReference type="Ensembl" id="ENSMUST00000069660.13">
    <molecule id="Q8C753-1"/>
    <property type="protein sequence ID" value="ENSMUSP00000065744.7"/>
    <property type="gene ID" value="ENSMUSG00000032743.16"/>
</dbReference>
<dbReference type="GeneID" id="233865"/>
<dbReference type="KEGG" id="mmu:233865"/>
<dbReference type="UCSC" id="uc009jqm.1">
    <molecule id="Q8C753-1"/>
    <property type="organism name" value="mouse"/>
</dbReference>
<dbReference type="UCSC" id="uc009jqn.1">
    <molecule id="Q8C753-2"/>
    <property type="organism name" value="mouse"/>
</dbReference>
<dbReference type="AGR" id="MGI:2442760"/>
<dbReference type="CTD" id="23247"/>
<dbReference type="MGI" id="MGI:2442760">
    <property type="gene designation" value="Katnip"/>
</dbReference>
<dbReference type="VEuPathDB" id="HostDB:ENSMUSG00000032743"/>
<dbReference type="eggNOG" id="ENOG502QRY1">
    <property type="taxonomic scope" value="Eukaryota"/>
</dbReference>
<dbReference type="GeneTree" id="ENSGT00390000004566"/>
<dbReference type="HOGENOM" id="CLU_003418_0_1_1"/>
<dbReference type="InParanoid" id="Q8C753"/>
<dbReference type="OMA" id="IFCYDES"/>
<dbReference type="OrthoDB" id="304622at2759"/>
<dbReference type="PhylomeDB" id="Q8C753"/>
<dbReference type="TreeFam" id="TF314150"/>
<dbReference type="BioGRID-ORCS" id="233865">
    <property type="hits" value="2 hits in 77 CRISPR screens"/>
</dbReference>
<dbReference type="ChiTaRS" id="D430042O09Rik">
    <property type="organism name" value="mouse"/>
</dbReference>
<dbReference type="PRO" id="PR:Q8C753"/>
<dbReference type="Proteomes" id="UP000000589">
    <property type="component" value="Chromosome 7"/>
</dbReference>
<dbReference type="RNAct" id="Q8C753">
    <property type="molecule type" value="protein"/>
</dbReference>
<dbReference type="Bgee" id="ENSMUSG00000032743">
    <property type="expression patterns" value="Expressed in retinal neural layer and 219 other cell types or tissues"/>
</dbReference>
<dbReference type="ExpressionAtlas" id="Q8C753">
    <property type="expression patterns" value="baseline and differential"/>
</dbReference>
<dbReference type="GO" id="GO:0034451">
    <property type="term" value="C:centriolar satellite"/>
    <property type="evidence" value="ECO:0007669"/>
    <property type="project" value="Ensembl"/>
</dbReference>
<dbReference type="GO" id="GO:0036064">
    <property type="term" value="C:ciliary basal body"/>
    <property type="evidence" value="ECO:0007669"/>
    <property type="project" value="Ensembl"/>
</dbReference>
<dbReference type="GO" id="GO:0005737">
    <property type="term" value="C:cytoplasm"/>
    <property type="evidence" value="ECO:0007669"/>
    <property type="project" value="UniProtKB-KW"/>
</dbReference>
<dbReference type="GO" id="GO:0005576">
    <property type="term" value="C:extracellular region"/>
    <property type="evidence" value="ECO:0007669"/>
    <property type="project" value="GOC"/>
</dbReference>
<dbReference type="GO" id="GO:0005654">
    <property type="term" value="C:nucleoplasm"/>
    <property type="evidence" value="ECO:0007669"/>
    <property type="project" value="Ensembl"/>
</dbReference>
<dbReference type="GO" id="GO:0005886">
    <property type="term" value="C:plasma membrane"/>
    <property type="evidence" value="ECO:0007669"/>
    <property type="project" value="Ensembl"/>
</dbReference>
<dbReference type="GO" id="GO:0090660">
    <property type="term" value="P:cerebrospinal fluid circulation"/>
    <property type="evidence" value="ECO:0000315"/>
    <property type="project" value="MGI"/>
</dbReference>
<dbReference type="InterPro" id="IPR026704">
    <property type="entry name" value="KATNIP"/>
</dbReference>
<dbReference type="InterPro" id="IPR027859">
    <property type="entry name" value="KATNIP_dom"/>
</dbReference>
<dbReference type="PANTHER" id="PTHR21534">
    <property type="entry name" value="KATANIN-INTERACTING PROTEIN"/>
    <property type="match status" value="1"/>
</dbReference>
<dbReference type="PANTHER" id="PTHR21534:SF0">
    <property type="entry name" value="KATANIN-INTERACTING PROTEIN"/>
    <property type="match status" value="1"/>
</dbReference>
<dbReference type="Pfam" id="PF14652">
    <property type="entry name" value="DUF4457"/>
    <property type="match status" value="2"/>
</dbReference>
<reference key="1">
    <citation type="journal article" date="2009" name="PLoS Biol.">
        <title>Lineage-specific biology revealed by a finished genome assembly of the mouse.</title>
        <authorList>
            <person name="Church D.M."/>
            <person name="Goodstadt L."/>
            <person name="Hillier L.W."/>
            <person name="Zody M.C."/>
            <person name="Goldstein S."/>
            <person name="She X."/>
            <person name="Bult C.J."/>
            <person name="Agarwala R."/>
            <person name="Cherry J.L."/>
            <person name="DiCuccio M."/>
            <person name="Hlavina W."/>
            <person name="Kapustin Y."/>
            <person name="Meric P."/>
            <person name="Maglott D."/>
            <person name="Birtle Z."/>
            <person name="Marques A.C."/>
            <person name="Graves T."/>
            <person name="Zhou S."/>
            <person name="Teague B."/>
            <person name="Potamousis K."/>
            <person name="Churas C."/>
            <person name="Place M."/>
            <person name="Herschleb J."/>
            <person name="Runnheim R."/>
            <person name="Forrest D."/>
            <person name="Amos-Landgraf J."/>
            <person name="Schwartz D.C."/>
            <person name="Cheng Z."/>
            <person name="Lindblad-Toh K."/>
            <person name="Eichler E.E."/>
            <person name="Ponting C.P."/>
        </authorList>
    </citation>
    <scope>NUCLEOTIDE SEQUENCE [LARGE SCALE GENOMIC DNA]</scope>
    <source>
        <strain>C57BL/6J</strain>
    </source>
</reference>
<reference key="2">
    <citation type="journal article" date="2005" name="Science">
        <title>The transcriptional landscape of the mammalian genome.</title>
        <authorList>
            <person name="Carninci P."/>
            <person name="Kasukawa T."/>
            <person name="Katayama S."/>
            <person name="Gough J."/>
            <person name="Frith M.C."/>
            <person name="Maeda N."/>
            <person name="Oyama R."/>
            <person name="Ravasi T."/>
            <person name="Lenhard B."/>
            <person name="Wells C."/>
            <person name="Kodzius R."/>
            <person name="Shimokawa K."/>
            <person name="Bajic V.B."/>
            <person name="Brenner S.E."/>
            <person name="Batalov S."/>
            <person name="Forrest A.R."/>
            <person name="Zavolan M."/>
            <person name="Davis M.J."/>
            <person name="Wilming L.G."/>
            <person name="Aidinis V."/>
            <person name="Allen J.E."/>
            <person name="Ambesi-Impiombato A."/>
            <person name="Apweiler R."/>
            <person name="Aturaliya R.N."/>
            <person name="Bailey T.L."/>
            <person name="Bansal M."/>
            <person name="Baxter L."/>
            <person name="Beisel K.W."/>
            <person name="Bersano T."/>
            <person name="Bono H."/>
            <person name="Chalk A.M."/>
            <person name="Chiu K.P."/>
            <person name="Choudhary V."/>
            <person name="Christoffels A."/>
            <person name="Clutterbuck D.R."/>
            <person name="Crowe M.L."/>
            <person name="Dalla E."/>
            <person name="Dalrymple B.P."/>
            <person name="de Bono B."/>
            <person name="Della Gatta G."/>
            <person name="di Bernardo D."/>
            <person name="Down T."/>
            <person name="Engstrom P."/>
            <person name="Fagiolini M."/>
            <person name="Faulkner G."/>
            <person name="Fletcher C.F."/>
            <person name="Fukushima T."/>
            <person name="Furuno M."/>
            <person name="Futaki S."/>
            <person name="Gariboldi M."/>
            <person name="Georgii-Hemming P."/>
            <person name="Gingeras T.R."/>
            <person name="Gojobori T."/>
            <person name="Green R.E."/>
            <person name="Gustincich S."/>
            <person name="Harbers M."/>
            <person name="Hayashi Y."/>
            <person name="Hensch T.K."/>
            <person name="Hirokawa N."/>
            <person name="Hill D."/>
            <person name="Huminiecki L."/>
            <person name="Iacono M."/>
            <person name="Ikeo K."/>
            <person name="Iwama A."/>
            <person name="Ishikawa T."/>
            <person name="Jakt M."/>
            <person name="Kanapin A."/>
            <person name="Katoh M."/>
            <person name="Kawasawa Y."/>
            <person name="Kelso J."/>
            <person name="Kitamura H."/>
            <person name="Kitano H."/>
            <person name="Kollias G."/>
            <person name="Krishnan S.P."/>
            <person name="Kruger A."/>
            <person name="Kummerfeld S.K."/>
            <person name="Kurochkin I.V."/>
            <person name="Lareau L.F."/>
            <person name="Lazarevic D."/>
            <person name="Lipovich L."/>
            <person name="Liu J."/>
            <person name="Liuni S."/>
            <person name="McWilliam S."/>
            <person name="Madan Babu M."/>
            <person name="Madera M."/>
            <person name="Marchionni L."/>
            <person name="Matsuda H."/>
            <person name="Matsuzawa S."/>
            <person name="Miki H."/>
            <person name="Mignone F."/>
            <person name="Miyake S."/>
            <person name="Morris K."/>
            <person name="Mottagui-Tabar S."/>
            <person name="Mulder N."/>
            <person name="Nakano N."/>
            <person name="Nakauchi H."/>
            <person name="Ng P."/>
            <person name="Nilsson R."/>
            <person name="Nishiguchi S."/>
            <person name="Nishikawa S."/>
            <person name="Nori F."/>
            <person name="Ohara O."/>
            <person name="Okazaki Y."/>
            <person name="Orlando V."/>
            <person name="Pang K.C."/>
            <person name="Pavan W.J."/>
            <person name="Pavesi G."/>
            <person name="Pesole G."/>
            <person name="Petrovsky N."/>
            <person name="Piazza S."/>
            <person name="Reed J."/>
            <person name="Reid J.F."/>
            <person name="Ring B.Z."/>
            <person name="Ringwald M."/>
            <person name="Rost B."/>
            <person name="Ruan Y."/>
            <person name="Salzberg S.L."/>
            <person name="Sandelin A."/>
            <person name="Schneider C."/>
            <person name="Schoenbach C."/>
            <person name="Sekiguchi K."/>
            <person name="Semple C.A."/>
            <person name="Seno S."/>
            <person name="Sessa L."/>
            <person name="Sheng Y."/>
            <person name="Shibata Y."/>
            <person name="Shimada H."/>
            <person name="Shimada K."/>
            <person name="Silva D."/>
            <person name="Sinclair B."/>
            <person name="Sperling S."/>
            <person name="Stupka E."/>
            <person name="Sugiura K."/>
            <person name="Sultana R."/>
            <person name="Takenaka Y."/>
            <person name="Taki K."/>
            <person name="Tammoja K."/>
            <person name="Tan S.L."/>
            <person name="Tang S."/>
            <person name="Taylor M.S."/>
            <person name="Tegner J."/>
            <person name="Teichmann S.A."/>
            <person name="Ueda H.R."/>
            <person name="van Nimwegen E."/>
            <person name="Verardo R."/>
            <person name="Wei C.L."/>
            <person name="Yagi K."/>
            <person name="Yamanishi H."/>
            <person name="Zabarovsky E."/>
            <person name="Zhu S."/>
            <person name="Zimmer A."/>
            <person name="Hide W."/>
            <person name="Bult C."/>
            <person name="Grimmond S.M."/>
            <person name="Teasdale R.D."/>
            <person name="Liu E.T."/>
            <person name="Brusic V."/>
            <person name="Quackenbush J."/>
            <person name="Wahlestedt C."/>
            <person name="Mattick J.S."/>
            <person name="Hume D.A."/>
            <person name="Kai C."/>
            <person name="Sasaki D."/>
            <person name="Tomaru Y."/>
            <person name="Fukuda S."/>
            <person name="Kanamori-Katayama M."/>
            <person name="Suzuki M."/>
            <person name="Aoki J."/>
            <person name="Arakawa T."/>
            <person name="Iida J."/>
            <person name="Imamura K."/>
            <person name="Itoh M."/>
            <person name="Kato T."/>
            <person name="Kawaji H."/>
            <person name="Kawagashira N."/>
            <person name="Kawashima T."/>
            <person name="Kojima M."/>
            <person name="Kondo S."/>
            <person name="Konno H."/>
            <person name="Nakano K."/>
            <person name="Ninomiya N."/>
            <person name="Nishio T."/>
            <person name="Okada M."/>
            <person name="Plessy C."/>
            <person name="Shibata K."/>
            <person name="Shiraki T."/>
            <person name="Suzuki S."/>
            <person name="Tagami M."/>
            <person name="Waki K."/>
            <person name="Watahiki A."/>
            <person name="Okamura-Oho Y."/>
            <person name="Suzuki H."/>
            <person name="Kawai J."/>
            <person name="Hayashizaki Y."/>
        </authorList>
    </citation>
    <scope>NUCLEOTIDE SEQUENCE [LARGE SCALE MRNA] (ISOFORM 2)</scope>
    <scope>NUCLEOTIDE SEQUENCE [LARGE SCALE MRNA] OF 513-1610 (ISOFORM 3)</scope>
    <source>
        <strain>C57BL/6J</strain>
        <tissue>Lung</tissue>
    </source>
</reference>
<reference key="3">
    <citation type="journal article" date="2004" name="Genome Res.">
        <title>The status, quality, and expansion of the NIH full-length cDNA project: the Mammalian Gene Collection (MGC).</title>
        <authorList>
            <consortium name="The MGC Project Team"/>
        </authorList>
    </citation>
    <scope>NUCLEOTIDE SEQUENCE [LARGE SCALE MRNA] OF 144-558 AND 898-1610 (ISOFORM 1)</scope>
    <source>
        <tissue>Eye</tissue>
        <tissue>Mammary tumor</tissue>
    </source>
</reference>
<reference key="4">
    <citation type="journal article" date="2003" name="DNA Res.">
        <title>Prediction of the coding sequences of mouse homologues of KIAA gene: II. The complete nucleotide sequences of 400 mouse KIAA-homologous cDNAs identified by screening of terminal sequences of cDNA clones randomly sampled from size-fractionated libraries.</title>
        <authorList>
            <person name="Okazaki N."/>
            <person name="Kikuno R."/>
            <person name="Ohara R."/>
            <person name="Inamoto S."/>
            <person name="Aizawa H."/>
            <person name="Yuasa S."/>
            <person name="Nakajima D."/>
            <person name="Nagase T."/>
            <person name="Ohara O."/>
            <person name="Koga H."/>
        </authorList>
    </citation>
    <scope>NUCLEOTIDE SEQUENCE [LARGE SCALE MRNA] OF 1081-1610 (ISOFORM 4)</scope>
    <source>
        <tissue>Brain</tissue>
    </source>
</reference>
<reference key="5">
    <citation type="journal article" date="2010" name="Cell">
        <title>A tissue-specific atlas of mouse protein phosphorylation and expression.</title>
        <authorList>
            <person name="Huttlin E.L."/>
            <person name="Jedrychowski M.P."/>
            <person name="Elias J.E."/>
            <person name="Goswami T."/>
            <person name="Rad R."/>
            <person name="Beausoleil S.A."/>
            <person name="Villen J."/>
            <person name="Haas W."/>
            <person name="Sowa M.E."/>
            <person name="Gygi S.P."/>
        </authorList>
    </citation>
    <scope>IDENTIFICATION BY MASS SPECTROMETRY [LARGE SCALE ANALYSIS]</scope>
    <source>
        <tissue>Testis</tissue>
    </source>
</reference>
<reference key="6">
    <citation type="journal article" date="2015" name="Genome Biol.">
        <title>KIAA0556 is a novel ciliary basal body component mutated in Joubert syndrome.</title>
        <authorList>
            <person name="Sanders A.A."/>
            <person name="de Vrieze E."/>
            <person name="Alazami A.M."/>
            <person name="Alzahrani F."/>
            <person name="Malarkey E.B."/>
            <person name="Sorusch N."/>
            <person name="Tebbe L."/>
            <person name="Kuhns S."/>
            <person name="van Dam T.J."/>
            <person name="Alhashem A."/>
            <person name="Tabarki B."/>
            <person name="Lu Q."/>
            <person name="Lambacher N.J."/>
            <person name="Kennedy J.E."/>
            <person name="Bowie R.V."/>
            <person name="Hetterschijt L."/>
            <person name="van Beersum S."/>
            <person name="van Reeuwijk J."/>
            <person name="Boldt K."/>
            <person name="Kremer H."/>
            <person name="Kesterson R.A."/>
            <person name="Monies D."/>
            <person name="Abouelhoda M."/>
            <person name="Roepman R."/>
            <person name="Huynen M.H."/>
            <person name="Ueffing M."/>
            <person name="Russell R.B."/>
            <person name="Wolfrum U."/>
            <person name="Yoder B.K."/>
            <person name="van Wijk E."/>
            <person name="Alkuraya F.S."/>
            <person name="Blacque O.E."/>
        </authorList>
    </citation>
    <scope>DISRUPTION PHENOTYPE</scope>
</reference>
<name>KATIP_MOUSE</name>
<organism>
    <name type="scientific">Mus musculus</name>
    <name type="common">Mouse</name>
    <dbReference type="NCBI Taxonomy" id="10090"/>
    <lineage>
        <taxon>Eukaryota</taxon>
        <taxon>Metazoa</taxon>
        <taxon>Chordata</taxon>
        <taxon>Craniata</taxon>
        <taxon>Vertebrata</taxon>
        <taxon>Euteleostomi</taxon>
        <taxon>Mammalia</taxon>
        <taxon>Eutheria</taxon>
        <taxon>Euarchontoglires</taxon>
        <taxon>Glires</taxon>
        <taxon>Rodentia</taxon>
        <taxon>Myomorpha</taxon>
        <taxon>Muroidea</taxon>
        <taxon>Muridae</taxon>
        <taxon>Murinae</taxon>
        <taxon>Mus</taxon>
        <taxon>Mus</taxon>
    </lineage>
</organism>
<keyword id="KW-0025">Alternative splicing</keyword>
<keyword id="KW-0966">Cell projection</keyword>
<keyword id="KW-0175">Coiled coil</keyword>
<keyword id="KW-0963">Cytoplasm</keyword>
<keyword id="KW-0206">Cytoskeleton</keyword>
<keyword id="KW-0597">Phosphoprotein</keyword>
<keyword id="KW-1185">Reference proteome</keyword>
<proteinExistence type="evidence at protein level"/>
<accession>Q8C753</accession>
<accession>Q80TX9</accession>
<accession>Q8C759</accession>
<accession>Q8CFE1</accession>
<accession>Q8K0N9</accession>
<evidence type="ECO:0000250" key="1">
    <source>
        <dbReference type="UniProtKB" id="O60303"/>
    </source>
</evidence>
<evidence type="ECO:0000255" key="2"/>
<evidence type="ECO:0000256" key="3">
    <source>
        <dbReference type="SAM" id="MobiDB-lite"/>
    </source>
</evidence>
<evidence type="ECO:0000269" key="4">
    <source>
    </source>
</evidence>
<evidence type="ECO:0000303" key="5">
    <source>
    </source>
</evidence>
<evidence type="ECO:0000303" key="6">
    <source>
    </source>
</evidence>
<evidence type="ECO:0000305" key="7"/>
<comment type="function">
    <text evidence="1">May influence the stability of microtubules (MT), possibly through interaction with the MT-severing katanin complex.</text>
</comment>
<comment type="subunit">
    <text evidence="1">Interacts with microtubules. Interacts with 4 subunits of the katanin complex: KATNA1, KATNAL1, KATNB1 and KATNBL1.</text>
</comment>
<comment type="subcellular location">
    <subcellularLocation>
        <location evidence="1">Cytoplasm</location>
        <location evidence="1">Cytoskeleton</location>
        <location evidence="1">Cilium axoneme</location>
    </subcellularLocation>
    <subcellularLocation>
        <location evidence="1">Cytoplasm</location>
        <location evidence="1">Cytoskeleton</location>
        <location evidence="1">Cilium basal body</location>
    </subcellularLocation>
    <subcellularLocation>
        <location evidence="1">Cytoplasm</location>
        <location evidence="1">Cytoskeleton</location>
    </subcellularLocation>
    <text evidence="1">When overexpressed, localizes to the cytoplasm where it associates with acetylated alpha-tubulin.</text>
</comment>
<comment type="alternative products">
    <event type="alternative splicing"/>
    <isoform>
        <id>Q8C753-1</id>
        <name>1</name>
        <sequence type="displayed"/>
    </isoform>
    <isoform>
        <id>Q8C753-2</id>
        <name>2</name>
        <sequence type="described" ref="VSP_030009 VSP_030011 VSP_030012"/>
    </isoform>
    <isoform>
        <id>Q8C753-3</id>
        <name>3</name>
        <sequence type="described" ref="VSP_030010"/>
    </isoform>
    <isoform>
        <id>Q8C753-4</id>
        <name>4</name>
        <sequence type="described" ref="VSP_030013"/>
    </isoform>
</comment>
<comment type="disruption phenotype">
    <text evidence="4">Knockout mice frequently display brain-specific defects, resulting in a noncommunicating (obstructive) hydrocephalus.</text>
</comment>
<comment type="sequence caution" evidence="7">
    <conflict type="erroneous initiation">
        <sequence resource="EMBL-CDS" id="AAH30902"/>
    </conflict>
    <text>Truncated N-terminus.</text>
</comment>
<comment type="sequence caution" evidence="7">
    <conflict type="erroneous initiation">
        <sequence resource="EMBL-CDS" id="AAH42743"/>
    </conflict>
    <text>Truncated N-terminus.</text>
</comment>